<protein>
    <recommendedName>
        <fullName evidence="1">3-methyl-2-oxobutanoate hydroxymethyltransferase</fullName>
        <ecNumber evidence="1">2.1.2.11</ecNumber>
    </recommendedName>
    <alternativeName>
        <fullName evidence="1">Ketopantoate hydroxymethyltransferase</fullName>
        <shortName evidence="1">KPHMT</shortName>
    </alternativeName>
</protein>
<feature type="chain" id="PRO_0000184849" description="3-methyl-2-oxobutanoate hydroxymethyltransferase">
    <location>
        <begin position="1"/>
        <end position="260"/>
    </location>
</feature>
<feature type="active site" description="Proton acceptor" evidence="1">
    <location>
        <position position="183"/>
    </location>
</feature>
<feature type="binding site" evidence="1">
    <location>
        <begin position="44"/>
        <end position="45"/>
    </location>
    <ligand>
        <name>3-methyl-2-oxobutanoate</name>
        <dbReference type="ChEBI" id="CHEBI:11851"/>
    </ligand>
</feature>
<feature type="binding site" evidence="1">
    <location>
        <position position="44"/>
    </location>
    <ligand>
        <name>Mg(2+)</name>
        <dbReference type="ChEBI" id="CHEBI:18420"/>
    </ligand>
</feature>
<feature type="binding site" evidence="1">
    <location>
        <position position="83"/>
    </location>
    <ligand>
        <name>3-methyl-2-oxobutanoate</name>
        <dbReference type="ChEBI" id="CHEBI:11851"/>
    </ligand>
</feature>
<feature type="binding site" evidence="1">
    <location>
        <position position="83"/>
    </location>
    <ligand>
        <name>Mg(2+)</name>
        <dbReference type="ChEBI" id="CHEBI:18420"/>
    </ligand>
</feature>
<feature type="binding site" evidence="1">
    <location>
        <position position="113"/>
    </location>
    <ligand>
        <name>3-methyl-2-oxobutanoate</name>
        <dbReference type="ChEBI" id="CHEBI:11851"/>
    </ligand>
</feature>
<feature type="binding site" evidence="1">
    <location>
        <position position="115"/>
    </location>
    <ligand>
        <name>Mg(2+)</name>
        <dbReference type="ChEBI" id="CHEBI:18420"/>
    </ligand>
</feature>
<reference key="1">
    <citation type="journal article" date="2003" name="DNA Res.">
        <title>Complete genome structure of Gloeobacter violaceus PCC 7421, a cyanobacterium that lacks thylakoids.</title>
        <authorList>
            <person name="Nakamura Y."/>
            <person name="Kaneko T."/>
            <person name="Sato S."/>
            <person name="Mimuro M."/>
            <person name="Miyashita H."/>
            <person name="Tsuchiya T."/>
            <person name="Sasamoto S."/>
            <person name="Watanabe A."/>
            <person name="Kawashima K."/>
            <person name="Kishida Y."/>
            <person name="Kiyokawa C."/>
            <person name="Kohara M."/>
            <person name="Matsumoto M."/>
            <person name="Matsuno A."/>
            <person name="Nakazaki N."/>
            <person name="Shimpo S."/>
            <person name="Takeuchi C."/>
            <person name="Yamada M."/>
            <person name="Tabata S."/>
        </authorList>
    </citation>
    <scope>NUCLEOTIDE SEQUENCE [LARGE SCALE GENOMIC DNA]</scope>
    <source>
        <strain>ATCC 29082 / PCC 7421</strain>
    </source>
</reference>
<organism>
    <name type="scientific">Gloeobacter violaceus (strain ATCC 29082 / PCC 7421)</name>
    <dbReference type="NCBI Taxonomy" id="251221"/>
    <lineage>
        <taxon>Bacteria</taxon>
        <taxon>Bacillati</taxon>
        <taxon>Cyanobacteriota</taxon>
        <taxon>Cyanophyceae</taxon>
        <taxon>Gloeobacterales</taxon>
        <taxon>Gloeobacteraceae</taxon>
        <taxon>Gloeobacter</taxon>
    </lineage>
</organism>
<evidence type="ECO:0000255" key="1">
    <source>
        <dbReference type="HAMAP-Rule" id="MF_00156"/>
    </source>
</evidence>
<evidence type="ECO:0000305" key="2"/>
<gene>
    <name evidence="1" type="primary">panB</name>
    <name type="ordered locus">gll0762</name>
</gene>
<name>PANB_GLOVI</name>
<accession>Q7NMK3</accession>
<keyword id="KW-0963">Cytoplasm</keyword>
<keyword id="KW-0460">Magnesium</keyword>
<keyword id="KW-0479">Metal-binding</keyword>
<keyword id="KW-0566">Pantothenate biosynthesis</keyword>
<keyword id="KW-1185">Reference proteome</keyword>
<keyword id="KW-0808">Transferase</keyword>
<sequence length="260" mass="27677">MGLSIHSLRKLKERAQPIVALTATEYAMARILDQAGVDLLLVGDSLSMVALGHTSTLPVTVDELLHHCRAVRRGVERALLVADLPFGSYEQSPQQAFSTATRFLKEAGVQAVKLEGGYPRMTETVAFLTESGIPVLGHLGLTPQAVHQLGGYRVQGKTAQAAERLIDQALALEGAGAFALVLEHIPYDLAGEISGKLVIPTVGIGAGPHCNGQILVTHDLLGLTENPPPFVNPYADLRALISKAVGRYSADVRAHGSREE</sequence>
<proteinExistence type="inferred from homology"/>
<comment type="function">
    <text evidence="1">Catalyzes the reversible reaction in which hydroxymethyl group from 5,10-methylenetetrahydrofolate is transferred onto alpha-ketoisovalerate to form ketopantoate.</text>
</comment>
<comment type="catalytic activity">
    <reaction evidence="1">
        <text>3-methyl-2-oxobutanoate + (6R)-5,10-methylene-5,6,7,8-tetrahydrofolate + H2O = 2-dehydropantoate + (6S)-5,6,7,8-tetrahydrofolate</text>
        <dbReference type="Rhea" id="RHEA:11824"/>
        <dbReference type="ChEBI" id="CHEBI:11561"/>
        <dbReference type="ChEBI" id="CHEBI:11851"/>
        <dbReference type="ChEBI" id="CHEBI:15377"/>
        <dbReference type="ChEBI" id="CHEBI:15636"/>
        <dbReference type="ChEBI" id="CHEBI:57453"/>
        <dbReference type="EC" id="2.1.2.11"/>
    </reaction>
</comment>
<comment type="cofactor">
    <cofactor evidence="1">
        <name>Mg(2+)</name>
        <dbReference type="ChEBI" id="CHEBI:18420"/>
    </cofactor>
    <text evidence="1">Binds 1 Mg(2+) ion per subunit.</text>
</comment>
<comment type="pathway">
    <text evidence="1">Cofactor biosynthesis; (R)-pantothenate biosynthesis; (R)-pantoate from 3-methyl-2-oxobutanoate: step 1/2.</text>
</comment>
<comment type="subunit">
    <text evidence="1">Homodecamer; pentamer of dimers.</text>
</comment>
<comment type="subcellular location">
    <subcellularLocation>
        <location evidence="1">Cytoplasm</location>
    </subcellularLocation>
</comment>
<comment type="similarity">
    <text evidence="1">Belongs to the PanB family.</text>
</comment>
<comment type="sequence caution" evidence="2">
    <conflict type="erroneous initiation">
        <sequence resource="EMBL-CDS" id="BAC88703"/>
    </conflict>
</comment>
<dbReference type="EC" id="2.1.2.11" evidence="1"/>
<dbReference type="EMBL" id="BA000045">
    <property type="protein sequence ID" value="BAC88703.1"/>
    <property type="status" value="ALT_INIT"/>
    <property type="molecule type" value="Genomic_DNA"/>
</dbReference>
<dbReference type="RefSeq" id="NP_923708.1">
    <property type="nucleotide sequence ID" value="NC_005125.1"/>
</dbReference>
<dbReference type="RefSeq" id="WP_164928599.1">
    <property type="nucleotide sequence ID" value="NC_005125.1"/>
</dbReference>
<dbReference type="SMR" id="Q7NMK3"/>
<dbReference type="FunCoup" id="Q7NMK3">
    <property type="interactions" value="161"/>
</dbReference>
<dbReference type="STRING" id="251221.gene:10758239"/>
<dbReference type="EnsemblBacteria" id="BAC88703">
    <property type="protein sequence ID" value="BAC88703"/>
    <property type="gene ID" value="BAC88703"/>
</dbReference>
<dbReference type="KEGG" id="gvi:gll0762"/>
<dbReference type="PATRIC" id="fig|251221.4.peg.777"/>
<dbReference type="eggNOG" id="COG0413">
    <property type="taxonomic scope" value="Bacteria"/>
</dbReference>
<dbReference type="HOGENOM" id="CLU_036645_1_0_3"/>
<dbReference type="InParanoid" id="Q7NMK3"/>
<dbReference type="OrthoDB" id="9781789at2"/>
<dbReference type="PhylomeDB" id="Q7NMK3"/>
<dbReference type="UniPathway" id="UPA00028">
    <property type="reaction ID" value="UER00003"/>
</dbReference>
<dbReference type="Proteomes" id="UP000000557">
    <property type="component" value="Chromosome"/>
</dbReference>
<dbReference type="GO" id="GO:0005737">
    <property type="term" value="C:cytoplasm"/>
    <property type="evidence" value="ECO:0000318"/>
    <property type="project" value="GO_Central"/>
</dbReference>
<dbReference type="GO" id="GO:0003864">
    <property type="term" value="F:3-methyl-2-oxobutanoate hydroxymethyltransferase activity"/>
    <property type="evidence" value="ECO:0000318"/>
    <property type="project" value="GO_Central"/>
</dbReference>
<dbReference type="GO" id="GO:0000287">
    <property type="term" value="F:magnesium ion binding"/>
    <property type="evidence" value="ECO:0000318"/>
    <property type="project" value="GO_Central"/>
</dbReference>
<dbReference type="GO" id="GO:0015940">
    <property type="term" value="P:pantothenate biosynthetic process"/>
    <property type="evidence" value="ECO:0000318"/>
    <property type="project" value="GO_Central"/>
</dbReference>
<dbReference type="CDD" id="cd06557">
    <property type="entry name" value="KPHMT-like"/>
    <property type="match status" value="1"/>
</dbReference>
<dbReference type="FunFam" id="3.20.20.60:FF:000017">
    <property type="entry name" value="3-methyl-2-oxobutanoate hydroxymethyltransferase"/>
    <property type="match status" value="1"/>
</dbReference>
<dbReference type="Gene3D" id="3.20.20.60">
    <property type="entry name" value="Phosphoenolpyruvate-binding domains"/>
    <property type="match status" value="1"/>
</dbReference>
<dbReference type="HAMAP" id="MF_00156">
    <property type="entry name" value="PanB"/>
    <property type="match status" value="1"/>
</dbReference>
<dbReference type="InterPro" id="IPR003700">
    <property type="entry name" value="Pantoate_hydroxy_MeTrfase"/>
</dbReference>
<dbReference type="InterPro" id="IPR015813">
    <property type="entry name" value="Pyrv/PenolPyrv_kinase-like_dom"/>
</dbReference>
<dbReference type="InterPro" id="IPR040442">
    <property type="entry name" value="Pyrv_kinase-like_dom_sf"/>
</dbReference>
<dbReference type="NCBIfam" id="TIGR00222">
    <property type="entry name" value="panB"/>
    <property type="match status" value="1"/>
</dbReference>
<dbReference type="NCBIfam" id="NF001452">
    <property type="entry name" value="PRK00311.1"/>
    <property type="match status" value="1"/>
</dbReference>
<dbReference type="PANTHER" id="PTHR20881">
    <property type="entry name" value="3-METHYL-2-OXOBUTANOATE HYDROXYMETHYLTRANSFERASE"/>
    <property type="match status" value="1"/>
</dbReference>
<dbReference type="PANTHER" id="PTHR20881:SF0">
    <property type="entry name" value="3-METHYL-2-OXOBUTANOATE HYDROXYMETHYLTRANSFERASE"/>
    <property type="match status" value="1"/>
</dbReference>
<dbReference type="Pfam" id="PF02548">
    <property type="entry name" value="Pantoate_transf"/>
    <property type="match status" value="1"/>
</dbReference>
<dbReference type="PIRSF" id="PIRSF000388">
    <property type="entry name" value="Pantoate_hydroxy_MeTrfase"/>
    <property type="match status" value="1"/>
</dbReference>
<dbReference type="SUPFAM" id="SSF51621">
    <property type="entry name" value="Phosphoenolpyruvate/pyruvate domain"/>
    <property type="match status" value="1"/>
</dbReference>